<organism>
    <name type="scientific">Salmonella paratyphi A (strain ATCC 9150 / SARB42)</name>
    <dbReference type="NCBI Taxonomy" id="295319"/>
    <lineage>
        <taxon>Bacteria</taxon>
        <taxon>Pseudomonadati</taxon>
        <taxon>Pseudomonadota</taxon>
        <taxon>Gammaproteobacteria</taxon>
        <taxon>Enterobacterales</taxon>
        <taxon>Enterobacteriaceae</taxon>
        <taxon>Salmonella</taxon>
    </lineage>
</organism>
<gene>
    <name evidence="1" type="primary">lpxA</name>
    <name type="ordered locus">SPA0235</name>
</gene>
<keyword id="KW-0012">Acyltransferase</keyword>
<keyword id="KW-0963">Cytoplasm</keyword>
<keyword id="KW-0441">Lipid A biosynthesis</keyword>
<keyword id="KW-0444">Lipid biosynthesis</keyword>
<keyword id="KW-0443">Lipid metabolism</keyword>
<keyword id="KW-0677">Repeat</keyword>
<keyword id="KW-0808">Transferase</keyword>
<feature type="chain" id="PRO_0000302600" description="Acyl-[acyl-carrier-protein]--UDP-N-acetylglucosamine O-acyltransferase">
    <location>
        <begin position="1"/>
        <end position="262"/>
    </location>
</feature>
<evidence type="ECO:0000255" key="1">
    <source>
        <dbReference type="HAMAP-Rule" id="MF_00387"/>
    </source>
</evidence>
<protein>
    <recommendedName>
        <fullName evidence="1">Acyl-[acyl-carrier-protein]--UDP-N-acetylglucosamine O-acyltransferase</fullName>
        <shortName evidence="1">UDP-N-acetylglucosamine acyltransferase</shortName>
        <ecNumber evidence="1">2.3.1.129</ecNumber>
    </recommendedName>
</protein>
<sequence>MIDKSAFIHPTAIVEDGAVIGANAHIGPFCIVGPQVEIGEGTVLKSHVVVNGQTKIGRDNEIYQFASIGEVNQDLKYAGEPTRVEIGDRNRIRESVTIHRGTVQGGGLTKVGSDNLLMINAHVAHDCTVGNRCILANNATLAGHVSVDDFAIIGGMTAVHQFCIIGAHVMVGGCSGVAQDVPPYVIAQGNHATPFGVNIEGLKRRGFSREGLVAIRNAYKLLYRSGKTLDEAKLEIAELAEKHPEVKAFTEFFERSTRGPIR</sequence>
<accession>Q5PD73</accession>
<dbReference type="EC" id="2.3.1.129" evidence="1"/>
<dbReference type="EMBL" id="CP000026">
    <property type="protein sequence ID" value="AAV76264.1"/>
    <property type="molecule type" value="Genomic_DNA"/>
</dbReference>
<dbReference type="RefSeq" id="WP_000565950.1">
    <property type="nucleotide sequence ID" value="NC_006511.1"/>
</dbReference>
<dbReference type="SMR" id="Q5PD73"/>
<dbReference type="KEGG" id="spt:SPA0235"/>
<dbReference type="HOGENOM" id="CLU_061249_0_0_6"/>
<dbReference type="UniPathway" id="UPA00359">
    <property type="reaction ID" value="UER00477"/>
</dbReference>
<dbReference type="Proteomes" id="UP000008185">
    <property type="component" value="Chromosome"/>
</dbReference>
<dbReference type="GO" id="GO:0005737">
    <property type="term" value="C:cytoplasm"/>
    <property type="evidence" value="ECO:0007669"/>
    <property type="project" value="UniProtKB-SubCell"/>
</dbReference>
<dbReference type="GO" id="GO:0016020">
    <property type="term" value="C:membrane"/>
    <property type="evidence" value="ECO:0007669"/>
    <property type="project" value="GOC"/>
</dbReference>
<dbReference type="GO" id="GO:0008780">
    <property type="term" value="F:acyl-[acyl-carrier-protein]-UDP-N-acetylglucosamine O-acyltransferase activity"/>
    <property type="evidence" value="ECO:0007669"/>
    <property type="project" value="UniProtKB-UniRule"/>
</dbReference>
<dbReference type="GO" id="GO:0009245">
    <property type="term" value="P:lipid A biosynthetic process"/>
    <property type="evidence" value="ECO:0007669"/>
    <property type="project" value="UniProtKB-UniRule"/>
</dbReference>
<dbReference type="CDD" id="cd03351">
    <property type="entry name" value="LbH_UDP-GlcNAc_AT"/>
    <property type="match status" value="1"/>
</dbReference>
<dbReference type="FunFam" id="2.160.10.10:FF:000003">
    <property type="entry name" value="Acyl-[acyl-carrier-protein]--UDP-N-acetylglucosamine O-acyltransferase"/>
    <property type="match status" value="1"/>
</dbReference>
<dbReference type="Gene3D" id="2.160.10.10">
    <property type="entry name" value="Hexapeptide repeat proteins"/>
    <property type="match status" value="1"/>
</dbReference>
<dbReference type="Gene3D" id="1.20.1180.10">
    <property type="entry name" value="Udp N-acetylglucosamine O-acyltransferase, C-terminal domain"/>
    <property type="match status" value="1"/>
</dbReference>
<dbReference type="HAMAP" id="MF_00387">
    <property type="entry name" value="LpxA"/>
    <property type="match status" value="1"/>
</dbReference>
<dbReference type="InterPro" id="IPR029098">
    <property type="entry name" value="Acetyltransf_C"/>
</dbReference>
<dbReference type="InterPro" id="IPR037157">
    <property type="entry name" value="Acetyltransf_C_sf"/>
</dbReference>
<dbReference type="InterPro" id="IPR001451">
    <property type="entry name" value="Hexapep"/>
</dbReference>
<dbReference type="InterPro" id="IPR018357">
    <property type="entry name" value="Hexapep_transf_CS"/>
</dbReference>
<dbReference type="InterPro" id="IPR010137">
    <property type="entry name" value="Lipid_A_LpxA"/>
</dbReference>
<dbReference type="InterPro" id="IPR011004">
    <property type="entry name" value="Trimer_LpxA-like_sf"/>
</dbReference>
<dbReference type="NCBIfam" id="TIGR01852">
    <property type="entry name" value="lipid_A_lpxA"/>
    <property type="match status" value="1"/>
</dbReference>
<dbReference type="NCBIfam" id="NF003657">
    <property type="entry name" value="PRK05289.1"/>
    <property type="match status" value="1"/>
</dbReference>
<dbReference type="PANTHER" id="PTHR43480">
    <property type="entry name" value="ACYL-[ACYL-CARRIER-PROTEIN]--UDP-N-ACETYLGLUCOSAMINE O-ACYLTRANSFERASE"/>
    <property type="match status" value="1"/>
</dbReference>
<dbReference type="PANTHER" id="PTHR43480:SF1">
    <property type="entry name" value="ACYL-[ACYL-CARRIER-PROTEIN]--UDP-N-ACETYLGLUCOSAMINE O-ACYLTRANSFERASE, MITOCHONDRIAL-RELATED"/>
    <property type="match status" value="1"/>
</dbReference>
<dbReference type="Pfam" id="PF13720">
    <property type="entry name" value="Acetyltransf_11"/>
    <property type="match status" value="1"/>
</dbReference>
<dbReference type="Pfam" id="PF00132">
    <property type="entry name" value="Hexapep"/>
    <property type="match status" value="2"/>
</dbReference>
<dbReference type="PIRSF" id="PIRSF000456">
    <property type="entry name" value="UDP-GlcNAc_acltr"/>
    <property type="match status" value="1"/>
</dbReference>
<dbReference type="SUPFAM" id="SSF51161">
    <property type="entry name" value="Trimeric LpxA-like enzymes"/>
    <property type="match status" value="1"/>
</dbReference>
<dbReference type="PROSITE" id="PS00101">
    <property type="entry name" value="HEXAPEP_TRANSFERASES"/>
    <property type="match status" value="2"/>
</dbReference>
<proteinExistence type="inferred from homology"/>
<reference key="1">
    <citation type="journal article" date="2004" name="Nat. Genet.">
        <title>Comparison of genome degradation in Paratyphi A and Typhi, human-restricted serovars of Salmonella enterica that cause typhoid.</title>
        <authorList>
            <person name="McClelland M."/>
            <person name="Sanderson K.E."/>
            <person name="Clifton S.W."/>
            <person name="Latreille P."/>
            <person name="Porwollik S."/>
            <person name="Sabo A."/>
            <person name="Meyer R."/>
            <person name="Bieri T."/>
            <person name="Ozersky P."/>
            <person name="McLellan M."/>
            <person name="Harkins C.R."/>
            <person name="Wang C."/>
            <person name="Nguyen C."/>
            <person name="Berghoff A."/>
            <person name="Elliott G."/>
            <person name="Kohlberg S."/>
            <person name="Strong C."/>
            <person name="Du F."/>
            <person name="Carter J."/>
            <person name="Kremizki C."/>
            <person name="Layman D."/>
            <person name="Leonard S."/>
            <person name="Sun H."/>
            <person name="Fulton L."/>
            <person name="Nash W."/>
            <person name="Miner T."/>
            <person name="Minx P."/>
            <person name="Delehaunty K."/>
            <person name="Fronick C."/>
            <person name="Magrini V."/>
            <person name="Nhan M."/>
            <person name="Warren W."/>
            <person name="Florea L."/>
            <person name="Spieth J."/>
            <person name="Wilson R.K."/>
        </authorList>
    </citation>
    <scope>NUCLEOTIDE SEQUENCE [LARGE SCALE GENOMIC DNA]</scope>
    <source>
        <strain>ATCC 9150 / SARB42</strain>
    </source>
</reference>
<comment type="function">
    <text evidence="1">Involved in the biosynthesis of lipid A, a phosphorylated glycolipid that anchors the lipopolysaccharide to the outer membrane of the cell.</text>
</comment>
<comment type="catalytic activity">
    <reaction evidence="1">
        <text>a (3R)-hydroxyacyl-[ACP] + UDP-N-acetyl-alpha-D-glucosamine = a UDP-3-O-[(3R)-3-hydroxyacyl]-N-acetyl-alpha-D-glucosamine + holo-[ACP]</text>
        <dbReference type="Rhea" id="RHEA:67812"/>
        <dbReference type="Rhea" id="RHEA-COMP:9685"/>
        <dbReference type="Rhea" id="RHEA-COMP:9945"/>
        <dbReference type="ChEBI" id="CHEBI:57705"/>
        <dbReference type="ChEBI" id="CHEBI:64479"/>
        <dbReference type="ChEBI" id="CHEBI:78827"/>
        <dbReference type="ChEBI" id="CHEBI:173225"/>
        <dbReference type="EC" id="2.3.1.129"/>
    </reaction>
</comment>
<comment type="pathway">
    <text evidence="1">Glycolipid biosynthesis; lipid IV(A) biosynthesis; lipid IV(A) from (3R)-3-hydroxytetradecanoyl-[acyl-carrier-protein] and UDP-N-acetyl-alpha-D-glucosamine: step 1/6.</text>
</comment>
<comment type="subunit">
    <text evidence="1">Homotrimer.</text>
</comment>
<comment type="subcellular location">
    <subcellularLocation>
        <location evidence="1">Cytoplasm</location>
    </subcellularLocation>
</comment>
<comment type="similarity">
    <text evidence="1">Belongs to the transferase hexapeptide repeat family. LpxA subfamily.</text>
</comment>
<name>LPXA_SALPA</name>